<keyword id="KW-0002">3D-structure</keyword>
<keyword id="KW-0312">Gluconeogenesis</keyword>
<keyword id="KW-0324">Glycolysis</keyword>
<keyword id="KW-0413">Isomerase</keyword>
<evidence type="ECO:0000255" key="1">
    <source>
        <dbReference type="HAMAP-Rule" id="MF_01039"/>
    </source>
</evidence>
<evidence type="ECO:0007829" key="2">
    <source>
        <dbReference type="PDB" id="5UM0"/>
    </source>
</evidence>
<dbReference type="EC" id="5.4.2.11" evidence="1"/>
<dbReference type="EMBL" id="CP001050">
    <property type="protein sequence ID" value="ACF28942.1"/>
    <property type="molecule type" value="Genomic_DNA"/>
</dbReference>
<dbReference type="RefSeq" id="WP_003689726.1">
    <property type="nucleotide sequence ID" value="NC_011035.1"/>
</dbReference>
<dbReference type="PDB" id="5UM0">
    <property type="method" value="X-ray"/>
    <property type="resolution" value="1.85 A"/>
    <property type="chains" value="A/B/C/D=1-227"/>
</dbReference>
<dbReference type="PDBsum" id="5UM0"/>
<dbReference type="SMR" id="B4RIY7"/>
<dbReference type="KEGG" id="ngk:NGK_0248"/>
<dbReference type="HOGENOM" id="CLU_033323_1_5_4"/>
<dbReference type="UniPathway" id="UPA00109">
    <property type="reaction ID" value="UER00186"/>
</dbReference>
<dbReference type="Proteomes" id="UP000002564">
    <property type="component" value="Chromosome"/>
</dbReference>
<dbReference type="GO" id="GO:0004619">
    <property type="term" value="F:phosphoglycerate mutase activity"/>
    <property type="evidence" value="ECO:0007669"/>
    <property type="project" value="UniProtKB-EC"/>
</dbReference>
<dbReference type="GO" id="GO:0006094">
    <property type="term" value="P:gluconeogenesis"/>
    <property type="evidence" value="ECO:0007669"/>
    <property type="project" value="UniProtKB-UniRule"/>
</dbReference>
<dbReference type="GO" id="GO:0006096">
    <property type="term" value="P:glycolytic process"/>
    <property type="evidence" value="ECO:0007669"/>
    <property type="project" value="UniProtKB-UniRule"/>
</dbReference>
<dbReference type="CDD" id="cd07067">
    <property type="entry name" value="HP_PGM_like"/>
    <property type="match status" value="1"/>
</dbReference>
<dbReference type="FunFam" id="3.40.50.1240:FF:000003">
    <property type="entry name" value="2,3-bisphosphoglycerate-dependent phosphoglycerate mutase"/>
    <property type="match status" value="1"/>
</dbReference>
<dbReference type="Gene3D" id="3.40.50.1240">
    <property type="entry name" value="Phosphoglycerate mutase-like"/>
    <property type="match status" value="1"/>
</dbReference>
<dbReference type="HAMAP" id="MF_01039">
    <property type="entry name" value="PGAM_GpmA"/>
    <property type="match status" value="1"/>
</dbReference>
<dbReference type="InterPro" id="IPR013078">
    <property type="entry name" value="His_Pase_superF_clade-1"/>
</dbReference>
<dbReference type="InterPro" id="IPR029033">
    <property type="entry name" value="His_PPase_superfam"/>
</dbReference>
<dbReference type="InterPro" id="IPR005952">
    <property type="entry name" value="Phosphogly_mut1"/>
</dbReference>
<dbReference type="NCBIfam" id="TIGR01258">
    <property type="entry name" value="pgm_1"/>
    <property type="match status" value="1"/>
</dbReference>
<dbReference type="NCBIfam" id="NF010713">
    <property type="entry name" value="PRK14115.1"/>
    <property type="match status" value="1"/>
</dbReference>
<dbReference type="NCBIfam" id="NF010716">
    <property type="entry name" value="PRK14118.1"/>
    <property type="match status" value="1"/>
</dbReference>
<dbReference type="PANTHER" id="PTHR11931">
    <property type="entry name" value="PHOSPHOGLYCERATE MUTASE"/>
    <property type="match status" value="1"/>
</dbReference>
<dbReference type="Pfam" id="PF00300">
    <property type="entry name" value="His_Phos_1"/>
    <property type="match status" value="2"/>
</dbReference>
<dbReference type="PIRSF" id="PIRSF000709">
    <property type="entry name" value="6PFK_2-Ptase"/>
    <property type="match status" value="1"/>
</dbReference>
<dbReference type="SMART" id="SM00855">
    <property type="entry name" value="PGAM"/>
    <property type="match status" value="1"/>
</dbReference>
<dbReference type="SUPFAM" id="SSF53254">
    <property type="entry name" value="Phosphoglycerate mutase-like"/>
    <property type="match status" value="1"/>
</dbReference>
<reference key="1">
    <citation type="journal article" date="2008" name="J. Bacteriol.">
        <title>Complete genome sequence of Neisseria gonorrhoeae NCCP11945.</title>
        <authorList>
            <person name="Chung G.T."/>
            <person name="Yoo J.S."/>
            <person name="Oh H.B."/>
            <person name="Lee Y.S."/>
            <person name="Cha S.H."/>
            <person name="Kim S.J."/>
            <person name="Yoo C.K."/>
        </authorList>
    </citation>
    <scope>NUCLEOTIDE SEQUENCE [LARGE SCALE GENOMIC DNA]</scope>
    <source>
        <strain>NCCP11945</strain>
    </source>
</reference>
<accession>B4RIY7</accession>
<comment type="function">
    <text evidence="1">Catalyzes the interconversion of 2-phosphoglycerate and 3-phosphoglycerate.</text>
</comment>
<comment type="catalytic activity">
    <reaction evidence="1">
        <text>(2R)-2-phosphoglycerate = (2R)-3-phosphoglycerate</text>
        <dbReference type="Rhea" id="RHEA:15901"/>
        <dbReference type="ChEBI" id="CHEBI:58272"/>
        <dbReference type="ChEBI" id="CHEBI:58289"/>
        <dbReference type="EC" id="5.4.2.11"/>
    </reaction>
</comment>
<comment type="pathway">
    <text evidence="1">Carbohydrate degradation; glycolysis; pyruvate from D-glyceraldehyde 3-phosphate: step 3/5.</text>
</comment>
<comment type="subunit">
    <text evidence="1">Homodimer.</text>
</comment>
<comment type="similarity">
    <text evidence="1">Belongs to the phosphoglycerate mutase family. BPG-dependent PGAM subfamily.</text>
</comment>
<proteinExistence type="evidence at protein level"/>
<sequence>MELVFIRHGQSEWNAKNLFTGWRDVKLSEQGLAEAAAAGKKLKENGYEFDIAFTSVLTRAIKTCNIVLEESDQLFVPQIKTWRLNERHYGRLQGLDKKQTAEKYGDEQVRIWRRSYDTLPPLLDKDDAFSAHKDRRYAHLPADVVPDGENLKVTLERVLPFWEDQIAPAILSGKRVLVAAHGNSLRALAKHIEGISDEDIMGLEIPTGQPLVYKLDDNLKVIEKFYL</sequence>
<gene>
    <name evidence="1" type="primary">gpmA</name>
    <name type="ordered locus">NGK_0248</name>
</gene>
<protein>
    <recommendedName>
        <fullName evidence="1">2,3-bisphosphoglycerate-dependent phosphoglycerate mutase</fullName>
        <shortName evidence="1">BPG-dependent PGAM</shortName>
        <shortName evidence="1">PGAM</shortName>
        <shortName evidence="1">Phosphoglyceromutase</shortName>
        <shortName evidence="1">dPGM</shortName>
        <ecNumber evidence="1">5.4.2.11</ecNumber>
    </recommendedName>
</protein>
<organism>
    <name type="scientific">Neisseria gonorrhoeae (strain NCCP11945)</name>
    <dbReference type="NCBI Taxonomy" id="521006"/>
    <lineage>
        <taxon>Bacteria</taxon>
        <taxon>Pseudomonadati</taxon>
        <taxon>Pseudomonadota</taxon>
        <taxon>Betaproteobacteria</taxon>
        <taxon>Neisseriales</taxon>
        <taxon>Neisseriaceae</taxon>
        <taxon>Neisseria</taxon>
    </lineage>
</organism>
<feature type="chain" id="PRO_1000135960" description="2,3-bisphosphoglycerate-dependent phosphoglycerate mutase">
    <location>
        <begin position="1"/>
        <end position="227"/>
    </location>
</feature>
<feature type="active site" description="Tele-phosphohistidine intermediate" evidence="1">
    <location>
        <position position="8"/>
    </location>
</feature>
<feature type="active site" description="Proton donor/acceptor" evidence="1">
    <location>
        <position position="86"/>
    </location>
</feature>
<feature type="binding site" evidence="1">
    <location>
        <begin position="7"/>
        <end position="14"/>
    </location>
    <ligand>
        <name>substrate</name>
    </ligand>
</feature>
<feature type="binding site" evidence="1">
    <location>
        <begin position="20"/>
        <end position="21"/>
    </location>
    <ligand>
        <name>substrate</name>
    </ligand>
</feature>
<feature type="binding site" evidence="1">
    <location>
        <position position="59"/>
    </location>
    <ligand>
        <name>substrate</name>
    </ligand>
</feature>
<feature type="binding site" evidence="1">
    <location>
        <begin position="86"/>
        <end position="89"/>
    </location>
    <ligand>
        <name>substrate</name>
    </ligand>
</feature>
<feature type="binding site" evidence="1">
    <location>
        <position position="97"/>
    </location>
    <ligand>
        <name>substrate</name>
    </ligand>
</feature>
<feature type="binding site" evidence="1">
    <location>
        <begin position="113"/>
        <end position="114"/>
    </location>
    <ligand>
        <name>substrate</name>
    </ligand>
</feature>
<feature type="binding site" evidence="1">
    <location>
        <begin position="182"/>
        <end position="183"/>
    </location>
    <ligand>
        <name>substrate</name>
    </ligand>
</feature>
<feature type="site" description="Transition state stabilizer" evidence="1">
    <location>
        <position position="181"/>
    </location>
</feature>
<feature type="strand" evidence="2">
    <location>
        <begin position="1"/>
        <end position="7"/>
    </location>
</feature>
<feature type="helix" evidence="2">
    <location>
        <begin position="12"/>
        <end position="16"/>
    </location>
</feature>
<feature type="helix" evidence="2">
    <location>
        <begin position="29"/>
        <end position="44"/>
    </location>
</feature>
<feature type="strand" evidence="2">
    <location>
        <begin position="50"/>
        <end position="54"/>
    </location>
</feature>
<feature type="helix" evidence="2">
    <location>
        <begin position="58"/>
        <end position="70"/>
    </location>
</feature>
<feature type="strand" evidence="2">
    <location>
        <begin position="78"/>
        <end position="80"/>
    </location>
</feature>
<feature type="helix" evidence="2">
    <location>
        <begin position="82"/>
        <end position="84"/>
    </location>
</feature>
<feature type="helix" evidence="2">
    <location>
        <begin position="90"/>
        <end position="92"/>
    </location>
</feature>
<feature type="helix" evidence="2">
    <location>
        <begin position="97"/>
        <end position="104"/>
    </location>
</feature>
<feature type="helix" evidence="2">
    <location>
        <begin position="106"/>
        <end position="113"/>
    </location>
</feature>
<feature type="helix" evidence="2">
    <location>
        <begin position="131"/>
        <end position="133"/>
    </location>
</feature>
<feature type="helix" evidence="2">
    <location>
        <begin position="135"/>
        <end position="137"/>
    </location>
</feature>
<feature type="helix" evidence="2">
    <location>
        <begin position="142"/>
        <end position="144"/>
    </location>
</feature>
<feature type="helix" evidence="2">
    <location>
        <begin position="151"/>
        <end position="164"/>
    </location>
</feature>
<feature type="helix" evidence="2">
    <location>
        <begin position="166"/>
        <end position="171"/>
    </location>
</feature>
<feature type="strand" evidence="2">
    <location>
        <begin position="176"/>
        <end position="180"/>
    </location>
</feature>
<feature type="helix" evidence="2">
    <location>
        <begin position="182"/>
        <end position="193"/>
    </location>
</feature>
<feature type="helix" evidence="2">
    <location>
        <begin position="199"/>
        <end position="202"/>
    </location>
</feature>
<feature type="strand" evidence="2">
    <location>
        <begin position="211"/>
        <end position="215"/>
    </location>
</feature>
<feature type="strand" evidence="2">
    <location>
        <begin position="221"/>
        <end position="226"/>
    </location>
</feature>
<name>GPMA_NEIG2</name>